<dbReference type="EMBL" id="BX548175">
    <property type="protein sequence ID" value="CAE21498.1"/>
    <property type="molecule type" value="Genomic_DNA"/>
</dbReference>
<dbReference type="RefSeq" id="WP_011130691.1">
    <property type="nucleotide sequence ID" value="NC_005071.1"/>
</dbReference>
<dbReference type="SMR" id="Q7V653"/>
<dbReference type="KEGG" id="pmt:PMT_1323"/>
<dbReference type="eggNOG" id="COG3258">
    <property type="taxonomic scope" value="Bacteria"/>
</dbReference>
<dbReference type="HOGENOM" id="CLU_033498_0_0_3"/>
<dbReference type="OrthoDB" id="581091at2"/>
<dbReference type="Proteomes" id="UP000001423">
    <property type="component" value="Chromosome"/>
</dbReference>
<dbReference type="GO" id="GO:0031676">
    <property type="term" value="C:plasma membrane-derived thylakoid membrane"/>
    <property type="evidence" value="ECO:0007669"/>
    <property type="project" value="UniProtKB-SubCell"/>
</dbReference>
<dbReference type="GO" id="GO:0009055">
    <property type="term" value="F:electron transfer activity"/>
    <property type="evidence" value="ECO:0007669"/>
    <property type="project" value="UniProtKB-UniRule"/>
</dbReference>
<dbReference type="GO" id="GO:0020037">
    <property type="term" value="F:heme binding"/>
    <property type="evidence" value="ECO:0007669"/>
    <property type="project" value="InterPro"/>
</dbReference>
<dbReference type="GO" id="GO:0005506">
    <property type="term" value="F:iron ion binding"/>
    <property type="evidence" value="ECO:0007669"/>
    <property type="project" value="InterPro"/>
</dbReference>
<dbReference type="GO" id="GO:0015979">
    <property type="term" value="P:photosynthesis"/>
    <property type="evidence" value="ECO:0007669"/>
    <property type="project" value="UniProtKB-UniRule"/>
</dbReference>
<dbReference type="FunFam" id="2.60.40.830:FF:000001">
    <property type="entry name" value="Cytochrome f"/>
    <property type="match status" value="1"/>
</dbReference>
<dbReference type="Gene3D" id="2.40.50.100">
    <property type="match status" value="1"/>
</dbReference>
<dbReference type="Gene3D" id="2.60.40.830">
    <property type="entry name" value="Cytochrome f large domain"/>
    <property type="match status" value="1"/>
</dbReference>
<dbReference type="Gene3D" id="1.20.5.700">
    <property type="entry name" value="Single helix bin"/>
    <property type="match status" value="1"/>
</dbReference>
<dbReference type="HAMAP" id="MF_00610">
    <property type="entry name" value="Cytb6_f_cytF"/>
    <property type="match status" value="1"/>
</dbReference>
<dbReference type="InterPro" id="IPR024058">
    <property type="entry name" value="Cyt-f_TM"/>
</dbReference>
<dbReference type="InterPro" id="IPR002325">
    <property type="entry name" value="Cyt_f"/>
</dbReference>
<dbReference type="InterPro" id="IPR024094">
    <property type="entry name" value="Cyt_f_lg_dom"/>
</dbReference>
<dbReference type="InterPro" id="IPR036826">
    <property type="entry name" value="Cyt_f_lg_dom_sf"/>
</dbReference>
<dbReference type="InterPro" id="IPR011054">
    <property type="entry name" value="Rudment_hybrid_motif"/>
</dbReference>
<dbReference type="NCBIfam" id="NF002736">
    <property type="entry name" value="PRK02693.1"/>
    <property type="match status" value="1"/>
</dbReference>
<dbReference type="PANTHER" id="PTHR33288">
    <property type="match status" value="1"/>
</dbReference>
<dbReference type="PANTHER" id="PTHR33288:SF10">
    <property type="entry name" value="CYTOCHROME F"/>
    <property type="match status" value="1"/>
</dbReference>
<dbReference type="Pfam" id="PF01333">
    <property type="entry name" value="Apocytochr_F_C"/>
    <property type="match status" value="1"/>
</dbReference>
<dbReference type="Pfam" id="PF16639">
    <property type="entry name" value="Apocytochr_F_N"/>
    <property type="match status" value="1"/>
</dbReference>
<dbReference type="PRINTS" id="PR00610">
    <property type="entry name" value="CYTOCHROMEF"/>
</dbReference>
<dbReference type="SUPFAM" id="SSF103431">
    <property type="entry name" value="Cytochrome f subunit of the cytochrome b6f complex, transmembrane anchor"/>
    <property type="match status" value="1"/>
</dbReference>
<dbReference type="SUPFAM" id="SSF49441">
    <property type="entry name" value="Cytochrome f, large domain"/>
    <property type="match status" value="1"/>
</dbReference>
<dbReference type="SUPFAM" id="SSF51246">
    <property type="entry name" value="Rudiment single hybrid motif"/>
    <property type="match status" value="1"/>
</dbReference>
<dbReference type="PROSITE" id="PS51010">
    <property type="entry name" value="CYTF"/>
    <property type="match status" value="1"/>
</dbReference>
<feature type="signal peptide" evidence="1">
    <location>
        <begin position="1"/>
        <end position="23"/>
    </location>
</feature>
<feature type="chain" id="PRO_0000342033" description="Cytochrome f">
    <location>
        <begin position="24"/>
        <end position="310"/>
    </location>
</feature>
<feature type="transmembrane region" description="Helical" evidence="1">
    <location>
        <begin position="277"/>
        <end position="297"/>
    </location>
</feature>
<feature type="binding site" description="axial binding residue" evidence="1">
    <location>
        <position position="28"/>
    </location>
    <ligand>
        <name>heme</name>
        <dbReference type="ChEBI" id="CHEBI:30413"/>
    </ligand>
    <ligandPart>
        <name>Fe</name>
        <dbReference type="ChEBI" id="CHEBI:18248"/>
    </ligandPart>
</feature>
<feature type="binding site" description="covalent" evidence="1">
    <location>
        <position position="48"/>
    </location>
    <ligand>
        <name>heme</name>
        <dbReference type="ChEBI" id="CHEBI:30413"/>
    </ligand>
</feature>
<feature type="binding site" description="covalent" evidence="1">
    <location>
        <position position="51"/>
    </location>
    <ligand>
        <name>heme</name>
        <dbReference type="ChEBI" id="CHEBI:30413"/>
    </ligand>
</feature>
<feature type="binding site" description="axial binding residue" evidence="1">
    <location>
        <position position="52"/>
    </location>
    <ligand>
        <name>heme</name>
        <dbReference type="ChEBI" id="CHEBI:30413"/>
    </ligand>
    <ligandPart>
        <name>Fe</name>
        <dbReference type="ChEBI" id="CHEBI:18248"/>
    </ligandPart>
</feature>
<reference key="1">
    <citation type="journal article" date="2003" name="Nature">
        <title>Genome divergence in two Prochlorococcus ecotypes reflects oceanic niche differentiation.</title>
        <authorList>
            <person name="Rocap G."/>
            <person name="Larimer F.W."/>
            <person name="Lamerdin J.E."/>
            <person name="Malfatti S."/>
            <person name="Chain P."/>
            <person name="Ahlgren N.A."/>
            <person name="Arellano A."/>
            <person name="Coleman M."/>
            <person name="Hauser L."/>
            <person name="Hess W.R."/>
            <person name="Johnson Z.I."/>
            <person name="Land M.L."/>
            <person name="Lindell D."/>
            <person name="Post A.F."/>
            <person name="Regala W."/>
            <person name="Shah M."/>
            <person name="Shaw S.L."/>
            <person name="Steglich C."/>
            <person name="Sullivan M.B."/>
            <person name="Ting C.S."/>
            <person name="Tolonen A."/>
            <person name="Webb E.A."/>
            <person name="Zinser E.R."/>
            <person name="Chisholm S.W."/>
        </authorList>
    </citation>
    <scope>NUCLEOTIDE SEQUENCE [LARGE SCALE GENOMIC DNA]</scope>
    <source>
        <strain>MIT 9313</strain>
    </source>
</reference>
<comment type="function">
    <text evidence="1">Component of the cytochrome b6-f complex, which mediates electron transfer between photosystem II (PSII) and photosystem I (PSI), cyclic electron flow around PSI, and state transitions.</text>
</comment>
<comment type="cofactor">
    <cofactor evidence="1">
        <name>heme</name>
        <dbReference type="ChEBI" id="CHEBI:30413"/>
    </cofactor>
    <text evidence="1">Binds 1 heme group covalently.</text>
</comment>
<comment type="subunit">
    <text evidence="1">The 4 large subunits of the cytochrome b6-f complex are cytochrome b6, subunit IV (17 kDa polypeptide, PetD), cytochrome f and the Rieske protein, while the 4 small subunits are PetG, PetL, PetM and PetN. The complex functions as a dimer.</text>
</comment>
<comment type="subcellular location">
    <subcellularLocation>
        <location evidence="1">Cellular thylakoid membrane</location>
        <topology evidence="1">Single-pass membrane protein</topology>
    </subcellularLocation>
</comment>
<comment type="similarity">
    <text evidence="1">Belongs to the cytochrome f family.</text>
</comment>
<name>CYF_PROMM</name>
<evidence type="ECO:0000255" key="1">
    <source>
        <dbReference type="HAMAP-Rule" id="MF_00610"/>
    </source>
</evidence>
<keyword id="KW-0249">Electron transport</keyword>
<keyword id="KW-0349">Heme</keyword>
<keyword id="KW-0408">Iron</keyword>
<keyword id="KW-0472">Membrane</keyword>
<keyword id="KW-0479">Metal-binding</keyword>
<keyword id="KW-0602">Photosynthesis</keyword>
<keyword id="KW-1185">Reference proteome</keyword>
<keyword id="KW-0732">Signal</keyword>
<keyword id="KW-0793">Thylakoid</keyword>
<keyword id="KW-0812">Transmembrane</keyword>
<keyword id="KW-1133">Transmembrane helix</keyword>
<keyword id="KW-0813">Transport</keyword>
<accession>Q7V653</accession>
<protein>
    <recommendedName>
        <fullName evidence="1">Cytochrome f</fullName>
    </recommendedName>
</protein>
<gene>
    <name evidence="1" type="primary">petA</name>
    <name type="ordered locus">PMT_1323</name>
</gene>
<organism>
    <name type="scientific">Prochlorococcus marinus (strain MIT 9313)</name>
    <dbReference type="NCBI Taxonomy" id="74547"/>
    <lineage>
        <taxon>Bacteria</taxon>
        <taxon>Bacillati</taxon>
        <taxon>Cyanobacteriota</taxon>
        <taxon>Cyanophyceae</taxon>
        <taxon>Synechococcales</taxon>
        <taxon>Prochlorococcaceae</taxon>
        <taxon>Prochlorococcus</taxon>
    </lineage>
</organism>
<proteinExistence type="inferred from homology"/>
<sequence length="310" mass="33330">MRRLIPILLGSLVLSLSILVAPAASWAYPFWAQQNYDNPREATGKIVCANCHLAQKTTQAEVPQSVLPDSVFKAVVKIPYKKDTTEISSDGSDVPLQVGAVVMLPDGFRLAPQDRWSEEIKEETKGVFFTQYSEEKENILLVGPLPGDNNKEIVFPILSPDPATDSSIQFGKYSIHVGGNRGRGQILPTGEKTNNNAFTATEAGTITSIKSGKNGESDIKLKTDSGKVISETIPAGPSLLVKVDDKVEAGAPLTSDPNSGGFGQLDTEVVLQNPVRIYGLLAFFVAVSLAQILLVLKKKQVEKVQAAEGI</sequence>